<organism>
    <name type="scientific">Mus musculus</name>
    <name type="common">Mouse</name>
    <dbReference type="NCBI Taxonomy" id="10090"/>
    <lineage>
        <taxon>Eukaryota</taxon>
        <taxon>Metazoa</taxon>
        <taxon>Chordata</taxon>
        <taxon>Craniata</taxon>
        <taxon>Vertebrata</taxon>
        <taxon>Euteleostomi</taxon>
        <taxon>Mammalia</taxon>
        <taxon>Eutheria</taxon>
        <taxon>Euarchontoglires</taxon>
        <taxon>Glires</taxon>
        <taxon>Rodentia</taxon>
        <taxon>Myomorpha</taxon>
        <taxon>Muroidea</taxon>
        <taxon>Muridae</taxon>
        <taxon>Murinae</taxon>
        <taxon>Mus</taxon>
        <taxon>Mus</taxon>
    </lineage>
</organism>
<sequence length="922" mass="104260">MEDAPERTPSSSESTQPPGLAREPEVVSPGDSEGCARPLDTVPKKLCGYLSKFGGKGPIKGWKCRWFFYDERKCHLYYSRTAQDANPLDSIDLSSAVFDCKADAEEEGTFEIKTPSRVITLKAATKQAMLYWLQQLQMKRWEFHNSPPALPATPAAALAENGPTLHLKLEQEEAELEEFLCPVKTPTGLVGAAAALQPVPAVPSALQNISLKHLGTEIQNTMHNIRGNKQAQAAAHGPLVEDSPQGGEPQSGEQPSISDPSLPEKEPEDPAKSAPRSSVPSGPTQKPKRQSNTFPFFSDGLARSRTAQEKVAALEQQVLMLTKELKSQKELVIILHKALEAAQQEKRASSAYLAATEDRDRLELVRHKVRQIAELNQRVEALEQGRERLAHEAGLREQQVQALQQHVQLLMDKNHAKQQVICKLTQKLTEDLAQPADATNGDFLSQQERMEHLKDDMEAYRTQNRFLNSEIHQVTKIWRKVAEKEKALLTKCAYLQARNCQVESKYLAGLRRLQEAAGAEAGDFPELLQQLIQEALQWEAGEADSVGLSPVSEYDDYGFLTVPDYEMEDLKLLAKIQALEVRSHHLLAHEAVERPLRDRWATLTELTPSAELKQLLRAGVPREHRPRVWRWLVHRRVRHLQAPGCYQELLARGRACEHPAARQIELDLNRTFPTNKHFTCPTSSFPDKLRRVLLAFSWQNPTIGYCQGLNRLAAIALLVLEDEESAFWCLVAIVETILPAEYYSKTLTASQVDQRVLQDLLSEKLPRLTAHLGQHRVDLSLITFNWFLVVFADSLISDILLRVWDAFLYEGTKVVFRYALAIFKYNEEAILQLQDSLEIYQYLRFFTKTICDSRKLMSIAFNDMNPFPMKQLRQLRAAHRERLEAELRELELLKVEYLQRRASLGRAPPEGCVSEDEGEGDS</sequence>
<feature type="chain" id="PRO_0000395194" description="TBC1 domain family member 2A">
    <location>
        <begin position="1"/>
        <end position="922"/>
    </location>
</feature>
<feature type="domain" description="PH" evidence="4">
    <location>
        <begin position="43"/>
        <end position="141"/>
    </location>
</feature>
<feature type="domain" description="Rab-GAP TBC" evidence="5">
    <location>
        <begin position="619"/>
        <end position="811"/>
    </location>
</feature>
<feature type="region of interest" description="Interaction with CADH1" evidence="1">
    <location>
        <begin position="1"/>
        <end position="168"/>
    </location>
</feature>
<feature type="region of interest" description="Disordered" evidence="6">
    <location>
        <begin position="1"/>
        <end position="37"/>
    </location>
</feature>
<feature type="region of interest" description="Disordered" evidence="6">
    <location>
        <begin position="228"/>
        <end position="297"/>
    </location>
</feature>
<feature type="region of interest" description="Interaction with RAC1" evidence="1">
    <location>
        <begin position="298"/>
        <end position="435"/>
    </location>
</feature>
<feature type="coiled-coil region" evidence="3">
    <location>
        <begin position="302"/>
        <end position="333"/>
    </location>
</feature>
<feature type="coiled-coil region" evidence="3">
    <location>
        <begin position="362"/>
        <end position="417"/>
    </location>
</feature>
<feature type="coiled-coil region" evidence="3">
    <location>
        <begin position="443"/>
        <end position="476"/>
    </location>
</feature>
<feature type="coiled-coil region" evidence="3">
    <location>
        <begin position="869"/>
        <end position="904"/>
    </location>
</feature>
<feature type="compositionally biased region" description="Polar residues" evidence="6">
    <location>
        <begin position="8"/>
        <end position="17"/>
    </location>
</feature>
<feature type="compositionally biased region" description="Basic and acidic residues" evidence="6">
    <location>
        <begin position="262"/>
        <end position="271"/>
    </location>
</feature>
<feature type="compositionally biased region" description="Polar residues" evidence="6">
    <location>
        <begin position="275"/>
        <end position="295"/>
    </location>
</feature>
<feature type="modified residue" description="Phosphoserine" evidence="2">
    <location>
        <position position="914"/>
    </location>
</feature>
<feature type="splice variant" id="VSP_039384" description="In isoform 2." evidence="7">
    <original>NTMHNIRGNKQAQAAAHGPLVEDSPQGGEPQSGEQPSISDPSLPEKEPEDPAKSAPRSSVPSGPTQKPKRQSNTFPFFSDGLARSRTAQEKVAALEQQVLMLTKELKSQKELVIILHKALEAAQQEKRASSAYLAATEDRDRLELVRHKVRQIAELNQRVEALEQGRERLAHEAGLREQQVQALQQHVQLLMDKNHAKQQVICKLTQKLTEDLAQPADATNGDFLSQQERMEHLKDDMEAYRTQNRFLNSEIHQVTKIWRKVAEKEKALLTKCAYLQARNCQVESKYLAGLRRLQEAAGAEAGDFPELLQQLIQEALQWEAGEADSVGLSPVSEYDDYGFLTVPDYEMEDLKLLAKIQALEVRSHHLLAHEAVERPLRDRWATLTELTPSAELKQLLRAGVPREHRPRVWRWLVHRRVRHLQAPGCYQELLARGRACEHPAARQIELDLNRTFPTNKHFTCPTSSFPDKLRRVLLAFSWQNPTIGYCQGLNRLAAIALLVLEDEESAFWCLVAIVETILPAEYYSKTLTASQVDQRVLQDLLSEKLPRLTAHLGQHRVDLSLITFNWFLVVFADSLISDILLRVWDAFLYEGTKVVFRYALAIFKYNEEAILQLQDSLEIYQYLRFFTKTICDSRKLMSIAFNDMNPFPMKQLRQLRAAHRERLEAELRELELLKVEYLQRRASLGRAPPEGCVSEDEGEGDS</original>
    <variation>AVGVVTSTGAGVQETWSNTFHPM</variation>
    <location>
        <begin position="220"/>
        <end position="922"/>
    </location>
</feature>
<feature type="sequence conflict" description="In Ref. 1; BAE28440." evidence="8" ref="1">
    <original>V</original>
    <variation>A</variation>
    <location>
        <position position="27"/>
    </location>
</feature>
<feature type="sequence conflict" description="In Ref. 1; BAE28440." evidence="8" ref="1">
    <original>A</original>
    <variation>T</variation>
    <location>
        <position position="157"/>
    </location>
</feature>
<feature type="sequence conflict" description="In Ref. 1; BAE28440." evidence="8" ref="1">
    <original>L</original>
    <variation>P</variation>
    <location>
        <position position="165"/>
    </location>
</feature>
<feature type="sequence conflict" description="In Ref. 1; BAE28440." evidence="8" ref="1">
    <original>V</original>
    <variation>M</variation>
    <location>
        <position position="202"/>
    </location>
</feature>
<feature type="sequence conflict" description="In Ref. 1; BAE28440." evidence="8" ref="1">
    <original>S</original>
    <variation>L</variation>
    <location>
        <position position="243"/>
    </location>
</feature>
<feature type="sequence conflict" description="In Ref. 1; BAE28440." evidence="8" ref="1">
    <original>H</original>
    <variation>Q</variation>
    <location>
        <position position="415"/>
    </location>
</feature>
<feature type="sequence conflict" description="In Ref. 1; BAE28440." evidence="8" ref="1">
    <original>E</original>
    <variation>G</variation>
    <location>
        <position position="430"/>
    </location>
</feature>
<accession>B1AVH7</accession>
<accession>Q3UFW9</accession>
<accession>Q8BYB1</accession>
<keyword id="KW-0025">Alternative splicing</keyword>
<keyword id="KW-0965">Cell junction</keyword>
<keyword id="KW-0175">Coiled coil</keyword>
<keyword id="KW-0963">Cytoplasm</keyword>
<keyword id="KW-0968">Cytoplasmic vesicle</keyword>
<keyword id="KW-0343">GTPase activation</keyword>
<keyword id="KW-0597">Phosphoprotein</keyword>
<keyword id="KW-1185">Reference proteome</keyword>
<reference key="1">
    <citation type="journal article" date="2005" name="Science">
        <title>The transcriptional landscape of the mammalian genome.</title>
        <authorList>
            <person name="Carninci P."/>
            <person name="Kasukawa T."/>
            <person name="Katayama S."/>
            <person name="Gough J."/>
            <person name="Frith M.C."/>
            <person name="Maeda N."/>
            <person name="Oyama R."/>
            <person name="Ravasi T."/>
            <person name="Lenhard B."/>
            <person name="Wells C."/>
            <person name="Kodzius R."/>
            <person name="Shimokawa K."/>
            <person name="Bajic V.B."/>
            <person name="Brenner S.E."/>
            <person name="Batalov S."/>
            <person name="Forrest A.R."/>
            <person name="Zavolan M."/>
            <person name="Davis M.J."/>
            <person name="Wilming L.G."/>
            <person name="Aidinis V."/>
            <person name="Allen J.E."/>
            <person name="Ambesi-Impiombato A."/>
            <person name="Apweiler R."/>
            <person name="Aturaliya R.N."/>
            <person name="Bailey T.L."/>
            <person name="Bansal M."/>
            <person name="Baxter L."/>
            <person name="Beisel K.W."/>
            <person name="Bersano T."/>
            <person name="Bono H."/>
            <person name="Chalk A.M."/>
            <person name="Chiu K.P."/>
            <person name="Choudhary V."/>
            <person name="Christoffels A."/>
            <person name="Clutterbuck D.R."/>
            <person name="Crowe M.L."/>
            <person name="Dalla E."/>
            <person name="Dalrymple B.P."/>
            <person name="de Bono B."/>
            <person name="Della Gatta G."/>
            <person name="di Bernardo D."/>
            <person name="Down T."/>
            <person name="Engstrom P."/>
            <person name="Fagiolini M."/>
            <person name="Faulkner G."/>
            <person name="Fletcher C.F."/>
            <person name="Fukushima T."/>
            <person name="Furuno M."/>
            <person name="Futaki S."/>
            <person name="Gariboldi M."/>
            <person name="Georgii-Hemming P."/>
            <person name="Gingeras T.R."/>
            <person name="Gojobori T."/>
            <person name="Green R.E."/>
            <person name="Gustincich S."/>
            <person name="Harbers M."/>
            <person name="Hayashi Y."/>
            <person name="Hensch T.K."/>
            <person name="Hirokawa N."/>
            <person name="Hill D."/>
            <person name="Huminiecki L."/>
            <person name="Iacono M."/>
            <person name="Ikeo K."/>
            <person name="Iwama A."/>
            <person name="Ishikawa T."/>
            <person name="Jakt M."/>
            <person name="Kanapin A."/>
            <person name="Katoh M."/>
            <person name="Kawasawa Y."/>
            <person name="Kelso J."/>
            <person name="Kitamura H."/>
            <person name="Kitano H."/>
            <person name="Kollias G."/>
            <person name="Krishnan S.P."/>
            <person name="Kruger A."/>
            <person name="Kummerfeld S.K."/>
            <person name="Kurochkin I.V."/>
            <person name="Lareau L.F."/>
            <person name="Lazarevic D."/>
            <person name="Lipovich L."/>
            <person name="Liu J."/>
            <person name="Liuni S."/>
            <person name="McWilliam S."/>
            <person name="Madan Babu M."/>
            <person name="Madera M."/>
            <person name="Marchionni L."/>
            <person name="Matsuda H."/>
            <person name="Matsuzawa S."/>
            <person name="Miki H."/>
            <person name="Mignone F."/>
            <person name="Miyake S."/>
            <person name="Morris K."/>
            <person name="Mottagui-Tabar S."/>
            <person name="Mulder N."/>
            <person name="Nakano N."/>
            <person name="Nakauchi H."/>
            <person name="Ng P."/>
            <person name="Nilsson R."/>
            <person name="Nishiguchi S."/>
            <person name="Nishikawa S."/>
            <person name="Nori F."/>
            <person name="Ohara O."/>
            <person name="Okazaki Y."/>
            <person name="Orlando V."/>
            <person name="Pang K.C."/>
            <person name="Pavan W.J."/>
            <person name="Pavesi G."/>
            <person name="Pesole G."/>
            <person name="Petrovsky N."/>
            <person name="Piazza S."/>
            <person name="Reed J."/>
            <person name="Reid J.F."/>
            <person name="Ring B.Z."/>
            <person name="Ringwald M."/>
            <person name="Rost B."/>
            <person name="Ruan Y."/>
            <person name="Salzberg S.L."/>
            <person name="Sandelin A."/>
            <person name="Schneider C."/>
            <person name="Schoenbach C."/>
            <person name="Sekiguchi K."/>
            <person name="Semple C.A."/>
            <person name="Seno S."/>
            <person name="Sessa L."/>
            <person name="Sheng Y."/>
            <person name="Shibata Y."/>
            <person name="Shimada H."/>
            <person name="Shimada K."/>
            <person name="Silva D."/>
            <person name="Sinclair B."/>
            <person name="Sperling S."/>
            <person name="Stupka E."/>
            <person name="Sugiura K."/>
            <person name="Sultana R."/>
            <person name="Takenaka Y."/>
            <person name="Taki K."/>
            <person name="Tammoja K."/>
            <person name="Tan S.L."/>
            <person name="Tang S."/>
            <person name="Taylor M.S."/>
            <person name="Tegner J."/>
            <person name="Teichmann S.A."/>
            <person name="Ueda H.R."/>
            <person name="van Nimwegen E."/>
            <person name="Verardo R."/>
            <person name="Wei C.L."/>
            <person name="Yagi K."/>
            <person name="Yamanishi H."/>
            <person name="Zabarovsky E."/>
            <person name="Zhu S."/>
            <person name="Zimmer A."/>
            <person name="Hide W."/>
            <person name="Bult C."/>
            <person name="Grimmond S.M."/>
            <person name="Teasdale R.D."/>
            <person name="Liu E.T."/>
            <person name="Brusic V."/>
            <person name="Quackenbush J."/>
            <person name="Wahlestedt C."/>
            <person name="Mattick J.S."/>
            <person name="Hume D.A."/>
            <person name="Kai C."/>
            <person name="Sasaki D."/>
            <person name="Tomaru Y."/>
            <person name="Fukuda S."/>
            <person name="Kanamori-Katayama M."/>
            <person name="Suzuki M."/>
            <person name="Aoki J."/>
            <person name="Arakawa T."/>
            <person name="Iida J."/>
            <person name="Imamura K."/>
            <person name="Itoh M."/>
            <person name="Kato T."/>
            <person name="Kawaji H."/>
            <person name="Kawagashira N."/>
            <person name="Kawashima T."/>
            <person name="Kojima M."/>
            <person name="Kondo S."/>
            <person name="Konno H."/>
            <person name="Nakano K."/>
            <person name="Ninomiya N."/>
            <person name="Nishio T."/>
            <person name="Okada M."/>
            <person name="Plessy C."/>
            <person name="Shibata K."/>
            <person name="Shiraki T."/>
            <person name="Suzuki S."/>
            <person name="Tagami M."/>
            <person name="Waki K."/>
            <person name="Watahiki A."/>
            <person name="Okamura-Oho Y."/>
            <person name="Suzuki H."/>
            <person name="Kawai J."/>
            <person name="Hayashizaki Y."/>
        </authorList>
    </citation>
    <scope>NUCLEOTIDE SEQUENCE [LARGE SCALE MRNA] (ISOFORM 2)</scope>
    <scope>NUCLEOTIDE SEQUENCE [LARGE SCALE MRNA] OF 1-773 (ISOFORM 1)</scope>
    <source>
        <strain>C57BL/6J</strain>
        <tissue>Thymus</tissue>
    </source>
</reference>
<reference key="2">
    <citation type="journal article" date="2009" name="PLoS Biol.">
        <title>Lineage-specific biology revealed by a finished genome assembly of the mouse.</title>
        <authorList>
            <person name="Church D.M."/>
            <person name="Goodstadt L."/>
            <person name="Hillier L.W."/>
            <person name="Zody M.C."/>
            <person name="Goldstein S."/>
            <person name="She X."/>
            <person name="Bult C.J."/>
            <person name="Agarwala R."/>
            <person name="Cherry J.L."/>
            <person name="DiCuccio M."/>
            <person name="Hlavina W."/>
            <person name="Kapustin Y."/>
            <person name="Meric P."/>
            <person name="Maglott D."/>
            <person name="Birtle Z."/>
            <person name="Marques A.C."/>
            <person name="Graves T."/>
            <person name="Zhou S."/>
            <person name="Teague B."/>
            <person name="Potamousis K."/>
            <person name="Churas C."/>
            <person name="Place M."/>
            <person name="Herschleb J."/>
            <person name="Runnheim R."/>
            <person name="Forrest D."/>
            <person name="Amos-Landgraf J."/>
            <person name="Schwartz D.C."/>
            <person name="Cheng Z."/>
            <person name="Lindblad-Toh K."/>
            <person name="Eichler E.E."/>
            <person name="Ponting C.P."/>
        </authorList>
    </citation>
    <scope>NUCLEOTIDE SEQUENCE [LARGE SCALE GENOMIC DNA]</scope>
    <source>
        <strain>C57BL/6J</strain>
    </source>
</reference>
<name>TBD2A_MOUSE</name>
<gene>
    <name type="primary">Tbc1d2</name>
    <name type="synonym">Tbc1d2a</name>
</gene>
<dbReference type="EMBL" id="AK041359">
    <property type="protein sequence ID" value="BAC30918.1"/>
    <property type="molecule type" value="mRNA"/>
</dbReference>
<dbReference type="EMBL" id="AK148254">
    <property type="protein sequence ID" value="BAE28440.1"/>
    <property type="molecule type" value="mRNA"/>
</dbReference>
<dbReference type="EMBL" id="AL683884">
    <property type="status" value="NOT_ANNOTATED_CDS"/>
    <property type="molecule type" value="Genomic_DNA"/>
</dbReference>
<dbReference type="EMBL" id="BX571848">
    <property type="status" value="NOT_ANNOTATED_CDS"/>
    <property type="molecule type" value="Genomic_DNA"/>
</dbReference>
<dbReference type="EMBL" id="BX682536">
    <property type="status" value="NOT_ANNOTATED_CDS"/>
    <property type="molecule type" value="Genomic_DNA"/>
</dbReference>
<dbReference type="CCDS" id="CCDS18155.1">
    <molecule id="B1AVH7-1"/>
</dbReference>
<dbReference type="RefSeq" id="NP_941066.3">
    <molecule id="B1AVH7-1"/>
    <property type="nucleotide sequence ID" value="NM_198664.3"/>
</dbReference>
<dbReference type="SMR" id="B1AVH7"/>
<dbReference type="FunCoup" id="B1AVH7">
    <property type="interactions" value="798"/>
</dbReference>
<dbReference type="STRING" id="10090.ENSMUSP00000081670"/>
<dbReference type="GlyGen" id="B1AVH7">
    <property type="glycosylation" value="2 sites, 1 O-linked glycan (1 site)"/>
</dbReference>
<dbReference type="iPTMnet" id="B1AVH7"/>
<dbReference type="PhosphoSitePlus" id="B1AVH7"/>
<dbReference type="PaxDb" id="10090-ENSMUSP00000081670"/>
<dbReference type="PeptideAtlas" id="B1AVH7"/>
<dbReference type="ProteomicsDB" id="263079">
    <molecule id="B1AVH7-1"/>
</dbReference>
<dbReference type="ProteomicsDB" id="263080">
    <molecule id="B1AVH7-2"/>
</dbReference>
<dbReference type="Pumba" id="B1AVH7"/>
<dbReference type="Antibodypedia" id="28952">
    <property type="antibodies" value="110 antibodies from 23 providers"/>
</dbReference>
<dbReference type="Ensembl" id="ENSMUST00000084621.12">
    <molecule id="B1AVH7-1"/>
    <property type="protein sequence ID" value="ENSMUSP00000081670.6"/>
    <property type="gene ID" value="ENSMUSG00000039813.15"/>
</dbReference>
<dbReference type="Ensembl" id="ENSMUST00000107750.2">
    <molecule id="B1AVH7-2"/>
    <property type="protein sequence ID" value="ENSMUSP00000103379.2"/>
    <property type="gene ID" value="ENSMUSG00000039813.15"/>
</dbReference>
<dbReference type="GeneID" id="381605"/>
<dbReference type="KEGG" id="mmu:381605"/>
<dbReference type="UCSC" id="uc008suf.1">
    <molecule id="B1AVH7-1"/>
    <property type="organism name" value="mouse"/>
</dbReference>
<dbReference type="AGR" id="MGI:2652885"/>
<dbReference type="CTD" id="55357"/>
<dbReference type="MGI" id="MGI:2652885">
    <property type="gene designation" value="Tbc1d2"/>
</dbReference>
<dbReference type="VEuPathDB" id="HostDB:ENSMUSG00000039813"/>
<dbReference type="eggNOG" id="KOG2058">
    <property type="taxonomic scope" value="Eukaryota"/>
</dbReference>
<dbReference type="GeneTree" id="ENSGT00940000159937"/>
<dbReference type="HOGENOM" id="CLU_011278_0_0_1"/>
<dbReference type="InParanoid" id="B1AVH7"/>
<dbReference type="OMA" id="RWEFCNT"/>
<dbReference type="OrthoDB" id="294251at2759"/>
<dbReference type="PhylomeDB" id="B1AVH7"/>
<dbReference type="TreeFam" id="TF317336"/>
<dbReference type="Reactome" id="R-MMU-8854214">
    <property type="pathway name" value="TBC/RABGAPs"/>
</dbReference>
<dbReference type="BioGRID-ORCS" id="381605">
    <property type="hits" value="4 hits in 78 CRISPR screens"/>
</dbReference>
<dbReference type="ChiTaRS" id="Tbc1d2">
    <property type="organism name" value="mouse"/>
</dbReference>
<dbReference type="PRO" id="PR:B1AVH7"/>
<dbReference type="Proteomes" id="UP000000589">
    <property type="component" value="Chromosome 4"/>
</dbReference>
<dbReference type="RNAct" id="B1AVH7">
    <property type="molecule type" value="protein"/>
</dbReference>
<dbReference type="Bgee" id="ENSMUSG00000039813">
    <property type="expression patterns" value="Expressed in granulocyte and 74 other cell types or tissues"/>
</dbReference>
<dbReference type="GO" id="GO:0070161">
    <property type="term" value="C:anchoring junction"/>
    <property type="evidence" value="ECO:0007669"/>
    <property type="project" value="UniProtKB-SubCell"/>
</dbReference>
<dbReference type="GO" id="GO:0030054">
    <property type="term" value="C:cell junction"/>
    <property type="evidence" value="ECO:0000250"/>
    <property type="project" value="UniProtKB"/>
</dbReference>
<dbReference type="GO" id="GO:0031410">
    <property type="term" value="C:cytoplasmic vesicle"/>
    <property type="evidence" value="ECO:0000250"/>
    <property type="project" value="UniProtKB"/>
</dbReference>
<dbReference type="GO" id="GO:0005829">
    <property type="term" value="C:cytosol"/>
    <property type="evidence" value="ECO:0007669"/>
    <property type="project" value="Ensembl"/>
</dbReference>
<dbReference type="GO" id="GO:0005654">
    <property type="term" value="C:nucleoplasm"/>
    <property type="evidence" value="ECO:0007669"/>
    <property type="project" value="Ensembl"/>
</dbReference>
<dbReference type="GO" id="GO:0005886">
    <property type="term" value="C:plasma membrane"/>
    <property type="evidence" value="ECO:0007669"/>
    <property type="project" value="Ensembl"/>
</dbReference>
<dbReference type="GO" id="GO:0045296">
    <property type="term" value="F:cadherin binding"/>
    <property type="evidence" value="ECO:0007669"/>
    <property type="project" value="Ensembl"/>
</dbReference>
<dbReference type="GO" id="GO:0005096">
    <property type="term" value="F:GTPase activator activity"/>
    <property type="evidence" value="ECO:0000250"/>
    <property type="project" value="UniProtKB"/>
</dbReference>
<dbReference type="GO" id="GO:0043547">
    <property type="term" value="P:positive regulation of GTPase activity"/>
    <property type="evidence" value="ECO:0000250"/>
    <property type="project" value="UniProtKB"/>
</dbReference>
<dbReference type="CDD" id="cd01265">
    <property type="entry name" value="PH_TBC1D2A"/>
    <property type="match status" value="1"/>
</dbReference>
<dbReference type="FunFam" id="1.10.8.270:FF:000014">
    <property type="entry name" value="Putative TBC1 domain family member 2B"/>
    <property type="match status" value="1"/>
</dbReference>
<dbReference type="FunFam" id="2.30.29.30:FF:000248">
    <property type="entry name" value="TBC1 domain family member 2A isoform X1"/>
    <property type="match status" value="1"/>
</dbReference>
<dbReference type="FunFam" id="1.10.472.80:FF:000018">
    <property type="entry name" value="TBC1 domain family member 2B"/>
    <property type="match status" value="1"/>
</dbReference>
<dbReference type="Gene3D" id="2.30.29.30">
    <property type="entry name" value="Pleckstrin-homology domain (PH domain)/Phosphotyrosine-binding domain (PTB)"/>
    <property type="match status" value="1"/>
</dbReference>
<dbReference type="Gene3D" id="1.10.8.270">
    <property type="entry name" value="putative rabgap domain of human tbc1 domain family member 14 like domains"/>
    <property type="match status" value="1"/>
</dbReference>
<dbReference type="Gene3D" id="1.10.472.80">
    <property type="entry name" value="Ypt/Rab-GAP domain of gyp1p, domain 3"/>
    <property type="match status" value="1"/>
</dbReference>
<dbReference type="InterPro" id="IPR011993">
    <property type="entry name" value="PH-like_dom_sf"/>
</dbReference>
<dbReference type="InterPro" id="IPR001849">
    <property type="entry name" value="PH_domain"/>
</dbReference>
<dbReference type="InterPro" id="IPR000195">
    <property type="entry name" value="Rab-GAP-TBC_dom"/>
</dbReference>
<dbReference type="InterPro" id="IPR035969">
    <property type="entry name" value="Rab-GAP_TBC_sf"/>
</dbReference>
<dbReference type="InterPro" id="IPR050302">
    <property type="entry name" value="Rab_GAP_TBC_domain"/>
</dbReference>
<dbReference type="PANTHER" id="PTHR47219">
    <property type="entry name" value="RAB GTPASE-ACTIVATING PROTEIN 1-LIKE"/>
    <property type="match status" value="1"/>
</dbReference>
<dbReference type="PANTHER" id="PTHR47219:SF20">
    <property type="entry name" value="TBC1 DOMAIN FAMILY MEMBER 2B"/>
    <property type="match status" value="1"/>
</dbReference>
<dbReference type="Pfam" id="PF00169">
    <property type="entry name" value="PH"/>
    <property type="match status" value="1"/>
</dbReference>
<dbReference type="Pfam" id="PF00566">
    <property type="entry name" value="RabGAP-TBC"/>
    <property type="match status" value="1"/>
</dbReference>
<dbReference type="SMART" id="SM00233">
    <property type="entry name" value="PH"/>
    <property type="match status" value="1"/>
</dbReference>
<dbReference type="SMART" id="SM00164">
    <property type="entry name" value="TBC"/>
    <property type="match status" value="1"/>
</dbReference>
<dbReference type="SUPFAM" id="SSF50729">
    <property type="entry name" value="PH domain-like"/>
    <property type="match status" value="1"/>
</dbReference>
<dbReference type="SUPFAM" id="SSF47923">
    <property type="entry name" value="Ypt/Rab-GAP domain of gyp1p"/>
    <property type="match status" value="2"/>
</dbReference>
<dbReference type="PROSITE" id="PS50003">
    <property type="entry name" value="PH_DOMAIN"/>
    <property type="match status" value="1"/>
</dbReference>
<dbReference type="PROSITE" id="PS50086">
    <property type="entry name" value="TBC_RABGAP"/>
    <property type="match status" value="1"/>
</dbReference>
<comment type="function">
    <text evidence="1">Acts as a GTPase-activating protein for RAB7A. Signal effector acting as a linker between RAC1 and RAB7A, leading to RAB7A inactivation and subsequent inhibition of cadherin degradation and reduced cell-cell adhesion (By similarity).</text>
</comment>
<comment type="subunit">
    <text>Interacts with activated RAC1 and CDH1.</text>
</comment>
<comment type="subcellular location">
    <subcellularLocation>
        <location evidence="1">Cytoplasm</location>
    </subcellularLocation>
    <subcellularLocation>
        <location evidence="1">Cytoplasmic vesicle</location>
    </subcellularLocation>
    <subcellularLocation>
        <location evidence="1">Cell junction</location>
    </subcellularLocation>
</comment>
<comment type="alternative products">
    <event type="alternative splicing"/>
    <isoform>
        <id>B1AVH7-1</id>
        <name>1</name>
        <sequence type="displayed"/>
    </isoform>
    <isoform>
        <id>B1AVH7-2</id>
        <name>2</name>
        <sequence type="described" ref="VSP_039384"/>
    </isoform>
</comment>
<proteinExistence type="evidence at transcript level"/>
<protein>
    <recommendedName>
        <fullName>TBC1 domain family member 2A</fullName>
    </recommendedName>
</protein>
<evidence type="ECO:0000250" key="1"/>
<evidence type="ECO:0000250" key="2">
    <source>
        <dbReference type="UniProtKB" id="Q9BYX2"/>
    </source>
</evidence>
<evidence type="ECO:0000255" key="3"/>
<evidence type="ECO:0000255" key="4">
    <source>
        <dbReference type="PROSITE-ProRule" id="PRU00145"/>
    </source>
</evidence>
<evidence type="ECO:0000255" key="5">
    <source>
        <dbReference type="PROSITE-ProRule" id="PRU00163"/>
    </source>
</evidence>
<evidence type="ECO:0000256" key="6">
    <source>
        <dbReference type="SAM" id="MobiDB-lite"/>
    </source>
</evidence>
<evidence type="ECO:0000303" key="7">
    <source>
    </source>
</evidence>
<evidence type="ECO:0000305" key="8"/>